<reference key="1">
    <citation type="journal article" date="2005" name="Genome Res.">
        <title>Comparative and functional genomic analyses of the pathogenicity of phytopathogen Xanthomonas campestris pv. campestris.</title>
        <authorList>
            <person name="Qian W."/>
            <person name="Jia Y."/>
            <person name="Ren S.-X."/>
            <person name="He Y.-Q."/>
            <person name="Feng J.-X."/>
            <person name="Lu L.-F."/>
            <person name="Sun Q."/>
            <person name="Ying G."/>
            <person name="Tang D.-J."/>
            <person name="Tang H."/>
            <person name="Wu W."/>
            <person name="Hao P."/>
            <person name="Wang L."/>
            <person name="Jiang B.-L."/>
            <person name="Zeng S."/>
            <person name="Gu W.-Y."/>
            <person name="Lu G."/>
            <person name="Rong L."/>
            <person name="Tian Y."/>
            <person name="Yao Z."/>
            <person name="Fu G."/>
            <person name="Chen B."/>
            <person name="Fang R."/>
            <person name="Qiang B."/>
            <person name="Chen Z."/>
            <person name="Zhao G.-P."/>
            <person name="Tang J.-L."/>
            <person name="He C."/>
        </authorList>
    </citation>
    <scope>NUCLEOTIDE SEQUENCE [LARGE SCALE GENOMIC DNA]</scope>
    <source>
        <strain>8004</strain>
    </source>
</reference>
<evidence type="ECO:0000255" key="1">
    <source>
        <dbReference type="HAMAP-Rule" id="MF_01227"/>
    </source>
</evidence>
<evidence type="ECO:0000305" key="2"/>
<feature type="chain" id="PRO_0000266263" description="CTP synthase">
    <location>
        <begin position="1"/>
        <end position="554"/>
    </location>
</feature>
<feature type="domain" description="Glutamine amidotransferase type-1" evidence="1">
    <location>
        <begin position="292"/>
        <end position="545"/>
    </location>
</feature>
<feature type="region of interest" description="Amidoligase domain" evidence="1">
    <location>
        <begin position="1"/>
        <end position="265"/>
    </location>
</feature>
<feature type="active site" description="Nucleophile; for glutamine hydrolysis" evidence="1">
    <location>
        <position position="380"/>
    </location>
</feature>
<feature type="active site" evidence="1">
    <location>
        <position position="518"/>
    </location>
</feature>
<feature type="active site" evidence="1">
    <location>
        <position position="520"/>
    </location>
</feature>
<feature type="binding site" evidence="1">
    <location>
        <position position="13"/>
    </location>
    <ligand>
        <name>CTP</name>
        <dbReference type="ChEBI" id="CHEBI:37563"/>
        <note>allosteric inhibitor</note>
    </ligand>
</feature>
<feature type="binding site" evidence="1">
    <location>
        <position position="13"/>
    </location>
    <ligand>
        <name>UTP</name>
        <dbReference type="ChEBI" id="CHEBI:46398"/>
    </ligand>
</feature>
<feature type="binding site" evidence="1">
    <location>
        <begin position="14"/>
        <end position="19"/>
    </location>
    <ligand>
        <name>ATP</name>
        <dbReference type="ChEBI" id="CHEBI:30616"/>
    </ligand>
</feature>
<feature type="binding site" evidence="1">
    <location>
        <position position="71"/>
    </location>
    <ligand>
        <name>ATP</name>
        <dbReference type="ChEBI" id="CHEBI:30616"/>
    </ligand>
</feature>
<feature type="binding site" evidence="1">
    <location>
        <position position="71"/>
    </location>
    <ligand>
        <name>Mg(2+)</name>
        <dbReference type="ChEBI" id="CHEBI:18420"/>
    </ligand>
</feature>
<feature type="binding site" evidence="1">
    <location>
        <position position="139"/>
    </location>
    <ligand>
        <name>Mg(2+)</name>
        <dbReference type="ChEBI" id="CHEBI:18420"/>
    </ligand>
</feature>
<feature type="binding site" evidence="1">
    <location>
        <begin position="146"/>
        <end position="148"/>
    </location>
    <ligand>
        <name>CTP</name>
        <dbReference type="ChEBI" id="CHEBI:37563"/>
        <note>allosteric inhibitor</note>
    </ligand>
</feature>
<feature type="binding site" evidence="1">
    <location>
        <begin position="186"/>
        <end position="191"/>
    </location>
    <ligand>
        <name>CTP</name>
        <dbReference type="ChEBI" id="CHEBI:37563"/>
        <note>allosteric inhibitor</note>
    </ligand>
</feature>
<feature type="binding site" evidence="1">
    <location>
        <begin position="186"/>
        <end position="191"/>
    </location>
    <ligand>
        <name>UTP</name>
        <dbReference type="ChEBI" id="CHEBI:46398"/>
    </ligand>
</feature>
<feature type="binding site" evidence="1">
    <location>
        <position position="222"/>
    </location>
    <ligand>
        <name>CTP</name>
        <dbReference type="ChEBI" id="CHEBI:37563"/>
        <note>allosteric inhibitor</note>
    </ligand>
</feature>
<feature type="binding site" evidence="1">
    <location>
        <position position="222"/>
    </location>
    <ligand>
        <name>UTP</name>
        <dbReference type="ChEBI" id="CHEBI:46398"/>
    </ligand>
</feature>
<feature type="binding site" evidence="1">
    <location>
        <position position="353"/>
    </location>
    <ligand>
        <name>L-glutamine</name>
        <dbReference type="ChEBI" id="CHEBI:58359"/>
    </ligand>
</feature>
<feature type="binding site" evidence="1">
    <location>
        <begin position="381"/>
        <end position="384"/>
    </location>
    <ligand>
        <name>L-glutamine</name>
        <dbReference type="ChEBI" id="CHEBI:58359"/>
    </ligand>
</feature>
<feature type="binding site" evidence="1">
    <location>
        <position position="404"/>
    </location>
    <ligand>
        <name>L-glutamine</name>
        <dbReference type="ChEBI" id="CHEBI:58359"/>
    </ligand>
</feature>
<feature type="binding site" evidence="1">
    <location>
        <position position="471"/>
    </location>
    <ligand>
        <name>L-glutamine</name>
        <dbReference type="ChEBI" id="CHEBI:58359"/>
    </ligand>
</feature>
<proteinExistence type="inferred from homology"/>
<comment type="function">
    <text evidence="1">Catalyzes the ATP-dependent amination of UTP to CTP with either L-glutamine or ammonia as the source of nitrogen. Regulates intracellular CTP levels through interactions with the four ribonucleotide triphosphates.</text>
</comment>
<comment type="catalytic activity">
    <reaction evidence="1">
        <text>UTP + L-glutamine + ATP + H2O = CTP + L-glutamate + ADP + phosphate + 2 H(+)</text>
        <dbReference type="Rhea" id="RHEA:26426"/>
        <dbReference type="ChEBI" id="CHEBI:15377"/>
        <dbReference type="ChEBI" id="CHEBI:15378"/>
        <dbReference type="ChEBI" id="CHEBI:29985"/>
        <dbReference type="ChEBI" id="CHEBI:30616"/>
        <dbReference type="ChEBI" id="CHEBI:37563"/>
        <dbReference type="ChEBI" id="CHEBI:43474"/>
        <dbReference type="ChEBI" id="CHEBI:46398"/>
        <dbReference type="ChEBI" id="CHEBI:58359"/>
        <dbReference type="ChEBI" id="CHEBI:456216"/>
        <dbReference type="EC" id="6.3.4.2"/>
    </reaction>
</comment>
<comment type="catalytic activity">
    <reaction evidence="1">
        <text>L-glutamine + H2O = L-glutamate + NH4(+)</text>
        <dbReference type="Rhea" id="RHEA:15889"/>
        <dbReference type="ChEBI" id="CHEBI:15377"/>
        <dbReference type="ChEBI" id="CHEBI:28938"/>
        <dbReference type="ChEBI" id="CHEBI:29985"/>
        <dbReference type="ChEBI" id="CHEBI:58359"/>
    </reaction>
</comment>
<comment type="catalytic activity">
    <reaction evidence="1">
        <text>UTP + NH4(+) + ATP = CTP + ADP + phosphate + 2 H(+)</text>
        <dbReference type="Rhea" id="RHEA:16597"/>
        <dbReference type="ChEBI" id="CHEBI:15378"/>
        <dbReference type="ChEBI" id="CHEBI:28938"/>
        <dbReference type="ChEBI" id="CHEBI:30616"/>
        <dbReference type="ChEBI" id="CHEBI:37563"/>
        <dbReference type="ChEBI" id="CHEBI:43474"/>
        <dbReference type="ChEBI" id="CHEBI:46398"/>
        <dbReference type="ChEBI" id="CHEBI:456216"/>
    </reaction>
</comment>
<comment type="activity regulation">
    <text evidence="1">Allosterically activated by GTP, when glutamine is the substrate; GTP has no effect on the reaction when ammonia is the substrate. The allosteric effector GTP functions by stabilizing the protein conformation that binds the tetrahedral intermediate(s) formed during glutamine hydrolysis. Inhibited by the product CTP, via allosteric rather than competitive inhibition.</text>
</comment>
<comment type="pathway">
    <text evidence="1">Pyrimidine metabolism; CTP biosynthesis via de novo pathway; CTP from UDP: step 2/2.</text>
</comment>
<comment type="subunit">
    <text evidence="1">Homotetramer.</text>
</comment>
<comment type="miscellaneous">
    <text evidence="1">CTPSs have evolved a hybrid strategy for distinguishing between UTP and CTP. The overlapping regions of the product feedback inhibitory and substrate sites recognize a common feature in both compounds, the triphosphate moiety. To differentiate isosteric substrate and product pyrimidine rings, an additional pocket far from the expected kinase/ligase catalytic site, specifically recognizes the cytosine and ribose portions of the product inhibitor.</text>
</comment>
<comment type="similarity">
    <text evidence="1">Belongs to the CTP synthase family.</text>
</comment>
<comment type="sequence caution" evidence="2">
    <conflict type="erroneous initiation">
        <sequence resource="EMBL-CDS" id="AAY49584"/>
    </conflict>
</comment>
<protein>
    <recommendedName>
        <fullName evidence="1">CTP synthase</fullName>
        <ecNumber evidence="1">6.3.4.2</ecNumber>
    </recommendedName>
    <alternativeName>
        <fullName evidence="1">Cytidine 5'-triphosphate synthase</fullName>
    </alternativeName>
    <alternativeName>
        <fullName evidence="1">Cytidine triphosphate synthetase</fullName>
        <shortName evidence="1">CTP synthetase</shortName>
        <shortName evidence="1">CTPS</shortName>
    </alternativeName>
    <alternativeName>
        <fullName evidence="1">UTP--ammonia ligase</fullName>
    </alternativeName>
</protein>
<organism>
    <name type="scientific">Xanthomonas campestris pv. campestris (strain 8004)</name>
    <dbReference type="NCBI Taxonomy" id="314565"/>
    <lineage>
        <taxon>Bacteria</taxon>
        <taxon>Pseudomonadati</taxon>
        <taxon>Pseudomonadota</taxon>
        <taxon>Gammaproteobacteria</taxon>
        <taxon>Lysobacterales</taxon>
        <taxon>Lysobacteraceae</taxon>
        <taxon>Xanthomonas</taxon>
    </lineage>
</organism>
<accession>Q4UTN9</accession>
<dbReference type="EC" id="6.3.4.2" evidence="1"/>
<dbReference type="EMBL" id="CP000050">
    <property type="protein sequence ID" value="AAY49584.1"/>
    <property type="status" value="ALT_INIT"/>
    <property type="molecule type" value="Genomic_DNA"/>
</dbReference>
<dbReference type="RefSeq" id="WP_011036874.1">
    <property type="nucleotide sequence ID" value="NZ_CP155948.1"/>
</dbReference>
<dbReference type="SMR" id="Q4UTN9"/>
<dbReference type="MEROPS" id="C26.964"/>
<dbReference type="KEGG" id="xcb:XC_2534"/>
<dbReference type="HOGENOM" id="CLU_011675_5_0_6"/>
<dbReference type="UniPathway" id="UPA00159">
    <property type="reaction ID" value="UER00277"/>
</dbReference>
<dbReference type="Proteomes" id="UP000000420">
    <property type="component" value="Chromosome"/>
</dbReference>
<dbReference type="GO" id="GO:0005829">
    <property type="term" value="C:cytosol"/>
    <property type="evidence" value="ECO:0007669"/>
    <property type="project" value="TreeGrafter"/>
</dbReference>
<dbReference type="GO" id="GO:0005524">
    <property type="term" value="F:ATP binding"/>
    <property type="evidence" value="ECO:0007669"/>
    <property type="project" value="UniProtKB-KW"/>
</dbReference>
<dbReference type="GO" id="GO:0003883">
    <property type="term" value="F:CTP synthase activity"/>
    <property type="evidence" value="ECO:0007669"/>
    <property type="project" value="UniProtKB-UniRule"/>
</dbReference>
<dbReference type="GO" id="GO:0004359">
    <property type="term" value="F:glutaminase activity"/>
    <property type="evidence" value="ECO:0007669"/>
    <property type="project" value="RHEA"/>
</dbReference>
<dbReference type="GO" id="GO:0042802">
    <property type="term" value="F:identical protein binding"/>
    <property type="evidence" value="ECO:0007669"/>
    <property type="project" value="TreeGrafter"/>
</dbReference>
<dbReference type="GO" id="GO:0046872">
    <property type="term" value="F:metal ion binding"/>
    <property type="evidence" value="ECO:0007669"/>
    <property type="project" value="UniProtKB-KW"/>
</dbReference>
<dbReference type="GO" id="GO:0044210">
    <property type="term" value="P:'de novo' CTP biosynthetic process"/>
    <property type="evidence" value="ECO:0007669"/>
    <property type="project" value="UniProtKB-UniRule"/>
</dbReference>
<dbReference type="GO" id="GO:0019856">
    <property type="term" value="P:pyrimidine nucleobase biosynthetic process"/>
    <property type="evidence" value="ECO:0007669"/>
    <property type="project" value="TreeGrafter"/>
</dbReference>
<dbReference type="CDD" id="cd03113">
    <property type="entry name" value="CTPS_N"/>
    <property type="match status" value="1"/>
</dbReference>
<dbReference type="CDD" id="cd01746">
    <property type="entry name" value="GATase1_CTP_Synthase"/>
    <property type="match status" value="1"/>
</dbReference>
<dbReference type="FunFam" id="3.40.50.300:FF:000009">
    <property type="entry name" value="CTP synthase"/>
    <property type="match status" value="1"/>
</dbReference>
<dbReference type="FunFam" id="3.40.50.880:FF:000002">
    <property type="entry name" value="CTP synthase"/>
    <property type="match status" value="1"/>
</dbReference>
<dbReference type="Gene3D" id="3.40.50.880">
    <property type="match status" value="1"/>
</dbReference>
<dbReference type="Gene3D" id="3.40.50.300">
    <property type="entry name" value="P-loop containing nucleotide triphosphate hydrolases"/>
    <property type="match status" value="1"/>
</dbReference>
<dbReference type="HAMAP" id="MF_01227">
    <property type="entry name" value="PyrG"/>
    <property type="match status" value="1"/>
</dbReference>
<dbReference type="InterPro" id="IPR029062">
    <property type="entry name" value="Class_I_gatase-like"/>
</dbReference>
<dbReference type="InterPro" id="IPR004468">
    <property type="entry name" value="CTP_synthase"/>
</dbReference>
<dbReference type="InterPro" id="IPR017456">
    <property type="entry name" value="CTP_synthase_N"/>
</dbReference>
<dbReference type="InterPro" id="IPR017926">
    <property type="entry name" value="GATASE"/>
</dbReference>
<dbReference type="InterPro" id="IPR033828">
    <property type="entry name" value="GATase1_CTP_Synthase"/>
</dbReference>
<dbReference type="InterPro" id="IPR027417">
    <property type="entry name" value="P-loop_NTPase"/>
</dbReference>
<dbReference type="NCBIfam" id="NF003792">
    <property type="entry name" value="PRK05380.1"/>
    <property type="match status" value="1"/>
</dbReference>
<dbReference type="NCBIfam" id="TIGR00337">
    <property type="entry name" value="PyrG"/>
    <property type="match status" value="1"/>
</dbReference>
<dbReference type="PANTHER" id="PTHR11550">
    <property type="entry name" value="CTP SYNTHASE"/>
    <property type="match status" value="1"/>
</dbReference>
<dbReference type="PANTHER" id="PTHR11550:SF0">
    <property type="entry name" value="CTP SYNTHASE-RELATED"/>
    <property type="match status" value="1"/>
</dbReference>
<dbReference type="Pfam" id="PF06418">
    <property type="entry name" value="CTP_synth_N"/>
    <property type="match status" value="1"/>
</dbReference>
<dbReference type="Pfam" id="PF00117">
    <property type="entry name" value="GATase"/>
    <property type="match status" value="1"/>
</dbReference>
<dbReference type="SUPFAM" id="SSF52317">
    <property type="entry name" value="Class I glutamine amidotransferase-like"/>
    <property type="match status" value="1"/>
</dbReference>
<dbReference type="SUPFAM" id="SSF52540">
    <property type="entry name" value="P-loop containing nucleoside triphosphate hydrolases"/>
    <property type="match status" value="1"/>
</dbReference>
<dbReference type="PROSITE" id="PS51273">
    <property type="entry name" value="GATASE_TYPE_1"/>
    <property type="match status" value="1"/>
</dbReference>
<keyword id="KW-0067">ATP-binding</keyword>
<keyword id="KW-0315">Glutamine amidotransferase</keyword>
<keyword id="KW-0436">Ligase</keyword>
<keyword id="KW-0460">Magnesium</keyword>
<keyword id="KW-0479">Metal-binding</keyword>
<keyword id="KW-0547">Nucleotide-binding</keyword>
<keyword id="KW-0665">Pyrimidine biosynthesis</keyword>
<gene>
    <name evidence="1" type="primary">pyrG</name>
    <name type="ordered locus">XC_2534</name>
</gene>
<sequence length="554" mass="61514">MTPLIFVTGGVVSSLGKGIAAASLASILEARGLKVTMMKLDPYINVDPGTMSPFQHGEVYVTDDGAETDLDLGHYERYVRTRLSRKNSVTTGRIYENVIRKERRGDYLGATVQVIPHITDEIRRCIDEATAGFDVALIEIGGTVGDIESLPFLEAIRQVRTERGAEKAMFMHLTLVPYIAAAGELKTKPTQHSVKELRSIGIQPDVLLCRSEQAVPDSERRKIALFTNVSERAVISCPDIDVLYGMPLELRRQGLDELVIDQFKLRDKVAAADLSEWEAVVDAVKHPLDEVTIAVVGKYVDHQDAYKSVAEALKHGGLRQRTKVNLTWLEAQDLEGSDMAALQGIDGILVPGGFGDRGFEGKVQTSKYAREHKVPYFGICYGMQAAVVDYARHVADLDAANSTENDRQSPHPVIGLITEWRTATGEVEKRDEKSDLGGTMRLGLQEQRLKPGTLAREVYGKDVVAERHRHRYEFNNRYRTQLEDAGLVICGKSMDDTLVEMVELPRDTHPWFLACQAHPEFLSTPRDGHPLFIGFVRAAREKKAGGKLLKEARA</sequence>
<name>PYRG_XANC8</name>